<proteinExistence type="evidence at protein level"/>
<accession>P38922</accession>
<accession>A2TBM5</accession>
<accession>D6W1H3</accession>
<accession>Q06HN4</accession>
<reference key="1">
    <citation type="journal article" date="1993" name="C. R. Acad. Sci. III, Sci. Vie">
        <title>Two yeast chromosomes are related by a fossil duplication of their centromeric regions.</title>
        <authorList>
            <person name="Lalo D."/>
            <person name="Stettler S."/>
            <person name="Mariotte S."/>
            <person name="Slonimski P.P."/>
            <person name="Thuriaux P."/>
        </authorList>
    </citation>
    <scope>NUCLEOTIDE SEQUENCE [GENOMIC DNA]</scope>
    <source>
        <strain>S288c / GRF88</strain>
    </source>
</reference>
<reference key="2">
    <citation type="journal article" date="1994" name="Yeast">
        <title>Organization of the centromeric region of chromosome XIV in Saccharomyces cerevisiae.</title>
        <authorList>
            <person name="Lalo D."/>
            <person name="Stettler S."/>
            <person name="Mariotte S."/>
            <person name="Gendreau E."/>
            <person name="Thuriaux P."/>
        </authorList>
    </citation>
    <scope>NUCLEOTIDE SEQUENCE [GENOMIC DNA]</scope>
    <source>
        <strain>S288c / GRF88</strain>
    </source>
</reference>
<reference key="3">
    <citation type="journal article" date="1994" name="Yeast">
        <title>Nucleotide sequence analysis of an 8887 bp region of the left arm of yeast chromosome XIV, encompassing the centromere sequence.</title>
        <authorList>
            <person name="Verhasselt P."/>
            <person name="Aert R."/>
            <person name="Voet M."/>
            <person name="Volckaert G."/>
        </authorList>
    </citation>
    <scope>NUCLEOTIDE SEQUENCE [GENOMIC DNA]</scope>
    <source>
        <strain>ATCC 96604 / S288c / FY1679</strain>
    </source>
</reference>
<reference key="4">
    <citation type="journal article" date="1997" name="Nature">
        <title>The nucleotide sequence of Saccharomyces cerevisiae chromosome XIV and its evolutionary implications.</title>
        <authorList>
            <person name="Philippsen P."/>
            <person name="Kleine K."/>
            <person name="Poehlmann R."/>
            <person name="Duesterhoeft A."/>
            <person name="Hamberg K."/>
            <person name="Hegemann J.H."/>
            <person name="Obermaier B."/>
            <person name="Urrestarazu L.A."/>
            <person name="Aert R."/>
            <person name="Albermann K."/>
            <person name="Altmann R."/>
            <person name="Andre B."/>
            <person name="Baladron V."/>
            <person name="Ballesta J.P.G."/>
            <person name="Becam A.-M."/>
            <person name="Beinhauer J.D."/>
            <person name="Boskovic J."/>
            <person name="Buitrago M.J."/>
            <person name="Bussereau F."/>
            <person name="Coster F."/>
            <person name="Crouzet M."/>
            <person name="D'Angelo M."/>
            <person name="Dal Pero F."/>
            <person name="De Antoni A."/>
            <person name="del Rey F."/>
            <person name="Doignon F."/>
            <person name="Domdey H."/>
            <person name="Dubois E."/>
            <person name="Fiedler T.A."/>
            <person name="Fleig U."/>
            <person name="Floeth M."/>
            <person name="Fritz C."/>
            <person name="Gaillardin C."/>
            <person name="Garcia-Cantalejo J.M."/>
            <person name="Glansdorff N."/>
            <person name="Goffeau A."/>
            <person name="Gueldener U."/>
            <person name="Herbert C.J."/>
            <person name="Heumann K."/>
            <person name="Heuss-Neitzel D."/>
            <person name="Hilbert H."/>
            <person name="Hinni K."/>
            <person name="Iraqui Houssaini I."/>
            <person name="Jacquet M."/>
            <person name="Jimenez A."/>
            <person name="Jonniaux J.-L."/>
            <person name="Karpfinger-Hartl L."/>
            <person name="Lanfranchi G."/>
            <person name="Lepingle A."/>
            <person name="Levesque H."/>
            <person name="Lyck R."/>
            <person name="Maftahi M."/>
            <person name="Mallet L."/>
            <person name="Maurer C.T.C."/>
            <person name="Messenguy F."/>
            <person name="Mewes H.-W."/>
            <person name="Moestl D."/>
            <person name="Nasr F."/>
            <person name="Nicaud J.-M."/>
            <person name="Niedenthal R.K."/>
            <person name="Pandolfo D."/>
            <person name="Pierard A."/>
            <person name="Piravandi E."/>
            <person name="Planta R.J."/>
            <person name="Pohl T.M."/>
            <person name="Purnelle B."/>
            <person name="Rebischung C."/>
            <person name="Remacha M.A."/>
            <person name="Revuelta J.L."/>
            <person name="Rinke M."/>
            <person name="Saiz J.E."/>
            <person name="Sartorello F."/>
            <person name="Scherens B."/>
            <person name="Sen-Gupta M."/>
            <person name="Soler-Mira A."/>
            <person name="Urbanus J.H.M."/>
            <person name="Valle G."/>
            <person name="Van Dyck L."/>
            <person name="Verhasselt P."/>
            <person name="Vierendeels F."/>
            <person name="Vissers S."/>
            <person name="Voet M."/>
            <person name="Volckaert G."/>
            <person name="Wach A."/>
            <person name="Wambutt R."/>
            <person name="Wedler H."/>
            <person name="Zollner A."/>
            <person name="Hani J."/>
        </authorList>
    </citation>
    <scope>NUCLEOTIDE SEQUENCE [LARGE SCALE GENOMIC DNA]</scope>
    <source>
        <strain>ATCC 204508 / S288c</strain>
    </source>
</reference>
<reference key="5">
    <citation type="journal article" date="2014" name="G3 (Bethesda)">
        <title>The reference genome sequence of Saccharomyces cerevisiae: Then and now.</title>
        <authorList>
            <person name="Engel S.R."/>
            <person name="Dietrich F.S."/>
            <person name="Fisk D.G."/>
            <person name="Binkley G."/>
            <person name="Balakrishnan R."/>
            <person name="Costanzo M.C."/>
            <person name="Dwight S.S."/>
            <person name="Hitz B.C."/>
            <person name="Karra K."/>
            <person name="Nash R.S."/>
            <person name="Weng S."/>
            <person name="Wong E.D."/>
            <person name="Lloyd P."/>
            <person name="Skrzypek M.S."/>
            <person name="Miyasato S.R."/>
            <person name="Simison M."/>
            <person name="Cherry J.M."/>
        </authorList>
    </citation>
    <scope>GENOME REANNOTATION</scope>
    <source>
        <strain>ATCC 204508 / S288c</strain>
    </source>
</reference>
<reference key="6">
    <citation type="journal article" date="2007" name="Genome Res.">
        <title>Genome-wide identification of spliced introns using a tiling microarray.</title>
        <authorList>
            <person name="Zhang Z."/>
            <person name="Hesselberth J.R."/>
            <person name="Fields S."/>
        </authorList>
    </citation>
    <scope>NUCLEOTIDE SEQUENCE [MRNA] OF 1-134</scope>
    <source>
        <strain>ATCC 201390 / BY4743</strain>
    </source>
</reference>
<reference key="7">
    <citation type="journal article" date="2007" name="Proc. Natl. Acad. Sci. U.S.A.">
        <title>High-density yeast-tiling array reveals previously undiscovered introns and extensive regulation of meiotic splicing.</title>
        <authorList>
            <person name="Juneau K."/>
            <person name="Palm C."/>
            <person name="Miranda M."/>
            <person name="Davis R.W."/>
        </authorList>
    </citation>
    <scope>NUCLEOTIDE SEQUENCE [MRNA] OF 1-119</scope>
    <source>
        <strain>ATCC 201390 / BY4743</strain>
    </source>
</reference>
<reference key="8">
    <citation type="journal article" date="1998" name="Genes Dev.">
        <title>Arginine methylation facilitates the nuclear export of hnRNP proteins.</title>
        <authorList>
            <person name="Shen E.C."/>
            <person name="Henry M.F."/>
            <person name="Weiss V.H."/>
            <person name="Valentini S.R."/>
            <person name="Silver P.A."/>
            <person name="Lee M.S."/>
        </authorList>
    </citation>
    <scope>SUBCELLULAR LOCATION</scope>
    <scope>METHYLATION BY HMT1</scope>
</reference>
<reference key="9">
    <citation type="journal article" date="2003" name="Nature">
        <title>Global analysis of protein localization in budding yeast.</title>
        <authorList>
            <person name="Huh W.-K."/>
            <person name="Falvo J.V."/>
            <person name="Gerke L.C."/>
            <person name="Carroll A.S."/>
            <person name="Howson R.W."/>
            <person name="Weissman J.S."/>
            <person name="O'Shea E.K."/>
        </authorList>
    </citation>
    <scope>SUBCELLULAR LOCATION [LARGE SCALE ANALYSIS]</scope>
</reference>
<reference key="10">
    <citation type="journal article" date="2003" name="Nature">
        <title>Global analysis of protein expression in yeast.</title>
        <authorList>
            <person name="Ghaemmaghami S."/>
            <person name="Huh W.-K."/>
            <person name="Bower K."/>
            <person name="Howson R.W."/>
            <person name="Belle A."/>
            <person name="Dephoure N."/>
            <person name="O'Shea E.K."/>
            <person name="Weissman J.S."/>
        </authorList>
    </citation>
    <scope>LEVEL OF PROTEIN EXPRESSION [LARGE SCALE ANALYSIS]</scope>
</reference>
<reference key="11">
    <citation type="journal article" date="2004" name="J. Biol. Chem.">
        <title>Differential export requirements for shuttling serine/arginine-type mRNA-binding proteins.</title>
        <authorList>
            <person name="Haecker S."/>
            <person name="Krebber H."/>
        </authorList>
    </citation>
    <scope>FUNCTION</scope>
    <scope>SUBCELLULAR LOCATION</scope>
</reference>
<reference key="12">
    <citation type="journal article" date="2004" name="Proc. Natl. Acad. Sci. U.S.A.">
        <title>Cotranscriptional recruitment of the serine-arginine-rich (SR)-like proteins Gbp2 and Hrb1 to nascent mRNA via the TREX complex.</title>
        <authorList>
            <person name="Hurt E."/>
            <person name="Luo M.J."/>
            <person name="Roether S."/>
            <person name="Reed R."/>
            <person name="Straesser K."/>
        </authorList>
    </citation>
    <scope>FUNCTION</scope>
</reference>
<reference key="13">
    <citation type="journal article" date="2007" name="J. Proteome Res.">
        <title>Large-scale phosphorylation analysis of alpha-factor-arrested Saccharomyces cerevisiae.</title>
        <authorList>
            <person name="Li X."/>
            <person name="Gerber S.A."/>
            <person name="Rudner A.D."/>
            <person name="Beausoleil S.A."/>
            <person name="Haas W."/>
            <person name="Villen J."/>
            <person name="Elias J.E."/>
            <person name="Gygi S.P."/>
        </authorList>
    </citation>
    <scope>PHOSPHORYLATION [LARGE SCALE ANALYSIS] AT SER-343 AND SER-355</scope>
    <scope>IDENTIFICATION BY MASS SPECTROMETRY [LARGE SCALE ANALYSIS]</scope>
    <source>
        <strain>ADR376</strain>
    </source>
</reference>
<reference key="14">
    <citation type="journal article" date="2008" name="Mol. Cell. Proteomics">
        <title>A multidimensional chromatography technology for in-depth phosphoproteome analysis.</title>
        <authorList>
            <person name="Albuquerque C.P."/>
            <person name="Smolka M.B."/>
            <person name="Payne S.H."/>
            <person name="Bafna V."/>
            <person name="Eng J."/>
            <person name="Zhou H."/>
        </authorList>
    </citation>
    <scope>PHOSPHORYLATION [LARGE SCALE ANALYSIS] AT SER-343</scope>
    <scope>IDENTIFICATION BY MASS SPECTROMETRY [LARGE SCALE ANALYSIS]</scope>
</reference>
<reference key="15">
    <citation type="journal article" date="2009" name="Science">
        <title>Global analysis of Cdk1 substrate phosphorylation sites provides insights into evolution.</title>
        <authorList>
            <person name="Holt L.J."/>
            <person name="Tuch B.B."/>
            <person name="Villen J."/>
            <person name="Johnson A.D."/>
            <person name="Gygi S.P."/>
            <person name="Morgan D.O."/>
        </authorList>
    </citation>
    <scope>PHOSPHORYLATION [LARGE SCALE ANALYSIS] AT SER-343 AND SER-355</scope>
    <scope>IDENTIFICATION BY MASS SPECTROMETRY [LARGE SCALE ANALYSIS]</scope>
</reference>
<reference key="16">
    <citation type="journal article" date="2013" name="Nat. Struct. Mol. Biol.">
        <title>Global analysis of yeast mRNPs.</title>
        <authorList>
            <person name="Mitchell S.F."/>
            <person name="Jain S."/>
            <person name="She M."/>
            <person name="Parker R."/>
        </authorList>
    </citation>
    <scope>SUBCELLULAR LOCATION</scope>
</reference>
<reference key="17">
    <citation type="journal article" date="2014" name="Nat. Commun.">
        <title>Quality control of spliced mRNAs requires the shuttling SR proteins Gbp2 and Hrb1.</title>
        <authorList>
            <person name="Hackmann A."/>
            <person name="Wu H."/>
            <person name="Schneider U.M."/>
            <person name="Meyer K."/>
            <person name="Jung K."/>
            <person name="Krebber H."/>
        </authorList>
    </citation>
    <scope>FUNCTION</scope>
    <scope>SUBCELLULAR LOCATION</scope>
</reference>
<reference key="18">
    <citation type="journal article" date="2021" name="J. Proteome Res.">
        <title>Discovery of arginine methylation, phosphorylation, and their co-occurrence in condensate-associated proteins in Saccharomyces cerevisiae.</title>
        <authorList>
            <person name="Hamey J.J."/>
            <person name="Nguyen A."/>
            <person name="Wilkins M.R."/>
        </authorList>
    </citation>
    <scope>METHYLATION AT ARG-127</scope>
    <scope>PHOSPHORYLATION AT SER-338;SER-343 AND SER-355</scope>
</reference>
<reference key="19">
    <citation type="journal article" date="2023" name="Int. Microbiol.">
        <title>The serine-arginine (SR) protein UmRrm75 from Ustilago maydis is a functional ortholog of yeast ScHrb1.</title>
        <authorList>
            <person name="Rodriguez-Pina A.L."/>
            <person name="Castano de la Serna E."/>
            <person name="Jimenez-Bremont J.F."/>
        </authorList>
    </citation>
    <scope>DISRUPTION PHENOTYPE</scope>
</reference>
<reference evidence="14 15 16" key="20">
    <citation type="journal article" date="2016" name="Nucleic Acids Res.">
        <title>Gbp2 interacts with THO/TREX through a novel type of RRM domain.</title>
        <authorList>
            <person name="Martinez-Lumbreras S."/>
            <person name="Taverniti V."/>
            <person name="Zorrilla S."/>
            <person name="Seraphin B."/>
            <person name="Perez-Canadillas J.M."/>
        </authorList>
    </citation>
    <scope>STRUCTURE BY NMR OF 357-454</scope>
</reference>
<gene>
    <name evidence="12" type="primary">HRB1</name>
    <name type="synonym">TOM34</name>
    <name type="ordered locus">YNL004W</name>
    <name type="ORF">N2009</name>
</gene>
<feature type="chain" id="PRO_0000081612" description="Serine/arginine (SR)-type shuttling mRNA binding protein HRB1">
    <location>
        <begin position="1"/>
        <end position="454"/>
    </location>
</feature>
<feature type="domain" description="RRM 1" evidence="1">
    <location>
        <begin position="161"/>
        <end position="237"/>
    </location>
</feature>
<feature type="domain" description="RRM 2" evidence="1">
    <location>
        <begin position="261"/>
        <end position="338"/>
    </location>
</feature>
<feature type="domain" description="RRM 3" evidence="1">
    <location>
        <begin position="376"/>
        <end position="453"/>
    </location>
</feature>
<feature type="region of interest" description="Disordered" evidence="2">
    <location>
        <begin position="1"/>
        <end position="141"/>
    </location>
</feature>
<feature type="compositionally biased region" description="Basic residues" evidence="2">
    <location>
        <begin position="14"/>
        <end position="24"/>
    </location>
</feature>
<feature type="compositionally biased region" description="Basic and acidic residues" evidence="2">
    <location>
        <begin position="25"/>
        <end position="38"/>
    </location>
</feature>
<feature type="compositionally biased region" description="Basic and acidic residues" evidence="2">
    <location>
        <begin position="50"/>
        <end position="113"/>
    </location>
</feature>
<feature type="modified residue" description="Omega-N-methylarginine" evidence="9">
    <location>
        <position position="127"/>
    </location>
</feature>
<feature type="modified residue" description="Phosphoserine" evidence="9">
    <location>
        <position position="338"/>
    </location>
</feature>
<feature type="modified residue" description="Phosphoserine" evidence="9 17 18 19">
    <location>
        <position position="343"/>
    </location>
</feature>
<feature type="modified residue" description="Phosphoserine" evidence="9 17 19">
    <location>
        <position position="355"/>
    </location>
</feature>
<feature type="strand" evidence="20">
    <location>
        <begin position="161"/>
        <end position="168"/>
    </location>
</feature>
<feature type="helix" evidence="20">
    <location>
        <begin position="174"/>
        <end position="181"/>
    </location>
</feature>
<feature type="helix" evidence="20">
    <location>
        <begin position="182"/>
        <end position="184"/>
    </location>
</feature>
<feature type="strand" evidence="20">
    <location>
        <begin position="187"/>
        <end position="191"/>
    </location>
</feature>
<feature type="strand" evidence="20">
    <location>
        <begin position="203"/>
        <end position="208"/>
    </location>
</feature>
<feature type="helix" evidence="20">
    <location>
        <begin position="212"/>
        <end position="217"/>
    </location>
</feature>
<feature type="turn" evidence="20">
    <location>
        <begin position="218"/>
        <end position="222"/>
    </location>
</feature>
<feature type="strand" evidence="20">
    <location>
        <begin position="232"/>
        <end position="234"/>
    </location>
</feature>
<feature type="strand" evidence="21">
    <location>
        <begin position="263"/>
        <end position="265"/>
    </location>
</feature>
<feature type="helix" evidence="21">
    <location>
        <begin position="274"/>
        <end position="282"/>
    </location>
</feature>
<feature type="strand" evidence="21">
    <location>
        <begin position="289"/>
        <end position="291"/>
    </location>
</feature>
<feature type="strand" evidence="21">
    <location>
        <begin position="304"/>
        <end position="307"/>
    </location>
</feature>
<feature type="helix" evidence="21">
    <location>
        <begin position="311"/>
        <end position="321"/>
    </location>
</feature>
<feature type="strand" evidence="21">
    <location>
        <begin position="325"/>
        <end position="330"/>
    </location>
</feature>
<feature type="strand" evidence="21">
    <location>
        <begin position="333"/>
        <end position="335"/>
    </location>
</feature>
<feature type="helix" evidence="22">
    <location>
        <begin position="359"/>
        <end position="363"/>
    </location>
</feature>
<feature type="turn" evidence="22">
    <location>
        <begin position="364"/>
        <end position="367"/>
    </location>
</feature>
<feature type="strand" evidence="22">
    <location>
        <begin position="368"/>
        <end position="371"/>
    </location>
</feature>
<feature type="strand" evidence="22">
    <location>
        <begin position="376"/>
        <end position="382"/>
    </location>
</feature>
<feature type="helix" evidence="22">
    <location>
        <begin position="389"/>
        <end position="396"/>
    </location>
</feature>
<feature type="turn" evidence="22">
    <location>
        <begin position="397"/>
        <end position="399"/>
    </location>
</feature>
<feature type="strand" evidence="22">
    <location>
        <begin position="402"/>
        <end position="413"/>
    </location>
</feature>
<feature type="strand" evidence="22">
    <location>
        <begin position="415"/>
        <end position="425"/>
    </location>
</feature>
<feature type="helix" evidence="22">
    <location>
        <begin position="426"/>
        <end position="435"/>
    </location>
</feature>
<feature type="turn" evidence="22">
    <location>
        <begin position="436"/>
        <end position="438"/>
    </location>
</feature>
<feature type="strand" evidence="22">
    <location>
        <begin position="447"/>
        <end position="453"/>
    </location>
</feature>
<name>HRB1_YEAST</name>
<sequence length="454" mass="52142">MSDQERGSENNNRSRSRSRSPVRRRMSDDHGYERDNHLSRRSGNYNGRRKFADTYRGSRDRGEYRGGRERSDYRERERFNNRDNPRSRDRYDDRRRGRDVTGRYGNRRDDYPRSFRSRHNTRDDSRRGGFGSSGARGDYGPLLARELDSTYEEKVNRNYSNSIFVGNLTYDSTPEDLTEFFSQIGKVVRADIITSRGHHRGMGTVEFTNSDDVDRAIRQYDGAFFMDRKIFVRQDNPPPSNNIKERKALDRGELRHNRKTHEVIVKNLPASVNWQALKDIFKECGNVAHADVELDGDGVSTGSGTVSFYDIKDLHRAIEKYNGYSIEGNVLDVKSKESVHNHSDGDDVDIPMDDSPVNEEARKFTENVVGGGERNRLIYCSNLPFSTAKSDLYDLFETIGKVNNAELRYDSKGAPTGIAVVEYDNVDDADVCIERLNNYNYGGCDLDISYAKRL</sequence>
<organism>
    <name type="scientific">Saccharomyces cerevisiae (strain ATCC 204508 / S288c)</name>
    <name type="common">Baker's yeast</name>
    <dbReference type="NCBI Taxonomy" id="559292"/>
    <lineage>
        <taxon>Eukaryota</taxon>
        <taxon>Fungi</taxon>
        <taxon>Dikarya</taxon>
        <taxon>Ascomycota</taxon>
        <taxon>Saccharomycotina</taxon>
        <taxon>Saccharomycetes</taxon>
        <taxon>Saccharomycetales</taxon>
        <taxon>Saccharomycetaceae</taxon>
        <taxon>Saccharomyces</taxon>
    </lineage>
</organism>
<protein>
    <recommendedName>
        <fullName evidence="13">Serine/arginine (SR)-type shuttling mRNA binding protein HRB1</fullName>
    </recommendedName>
    <alternativeName>
        <fullName evidence="12">Hypothetical RNA-binding protein 1</fullName>
    </alternativeName>
    <alternativeName>
        <fullName evidence="13">Polyadenylate-binding protein HRB1</fullName>
    </alternativeName>
    <alternativeName>
        <fullName>Protein TOM34</fullName>
    </alternativeName>
</protein>
<evidence type="ECO:0000255" key="1">
    <source>
        <dbReference type="PROSITE-ProRule" id="PRU00176"/>
    </source>
</evidence>
<evidence type="ECO:0000256" key="2">
    <source>
        <dbReference type="SAM" id="MobiDB-lite"/>
    </source>
</evidence>
<evidence type="ECO:0000269" key="3">
    <source>
    </source>
</evidence>
<evidence type="ECO:0000269" key="4">
    <source>
    </source>
</evidence>
<evidence type="ECO:0000269" key="5">
    <source>
    </source>
</evidence>
<evidence type="ECO:0000269" key="6">
    <source>
    </source>
</evidence>
<evidence type="ECO:0000269" key="7">
    <source>
    </source>
</evidence>
<evidence type="ECO:0000269" key="8">
    <source>
    </source>
</evidence>
<evidence type="ECO:0000269" key="9">
    <source>
    </source>
</evidence>
<evidence type="ECO:0000269" key="10">
    <source>
    </source>
</evidence>
<evidence type="ECO:0000269" key="11">
    <source>
    </source>
</evidence>
<evidence type="ECO:0000303" key="12">
    <source>
    </source>
</evidence>
<evidence type="ECO:0000305" key="13"/>
<evidence type="ECO:0007744" key="14">
    <source>
        <dbReference type="PDB" id="2MZR"/>
    </source>
</evidence>
<evidence type="ECO:0007744" key="15">
    <source>
        <dbReference type="PDB" id="2MZS"/>
    </source>
</evidence>
<evidence type="ECO:0007744" key="16">
    <source>
        <dbReference type="PDB" id="2MZT"/>
    </source>
</evidence>
<evidence type="ECO:0007744" key="17">
    <source>
    </source>
</evidence>
<evidence type="ECO:0007744" key="18">
    <source>
    </source>
</evidence>
<evidence type="ECO:0007744" key="19">
    <source>
    </source>
</evidence>
<evidence type="ECO:0007829" key="20">
    <source>
        <dbReference type="PDB" id="2MZR"/>
    </source>
</evidence>
<evidence type="ECO:0007829" key="21">
    <source>
        <dbReference type="PDB" id="2MZS"/>
    </source>
</evidence>
<evidence type="ECO:0007829" key="22">
    <source>
        <dbReference type="PDB" id="2MZT"/>
    </source>
</evidence>
<keyword id="KW-0002">3D-structure</keyword>
<keyword id="KW-0963">Cytoplasm</keyword>
<keyword id="KW-0488">Methylation</keyword>
<keyword id="KW-0539">Nucleus</keyword>
<keyword id="KW-0597">Phosphoprotein</keyword>
<keyword id="KW-1185">Reference proteome</keyword>
<keyword id="KW-0677">Repeat</keyword>
<keyword id="KW-0694">RNA-binding</keyword>
<comment type="function">
    <text evidence="5 6 8">Binds to intron-containing transcripts and is involved in quality control for the export of spliced mRNAs from the nucleus (PubMed:14676199, PubMed:14769921, PubMed:24452287). Binds to pre-mRNAs until splicing is completed or until faulty mRNAs are degraded. On correctly spliced mRNAs, GBP2 and HRB1 recruit MEX67 to allow nuclear export. On faulty mRNAs, GBP2 and HRB1 associate with the TRAMP complex that guides those pre-mRNAs to the exosome for degradation (PubMed:24452287).</text>
</comment>
<comment type="subcellular location">
    <subcellularLocation>
        <location evidence="5 8 11">Cytoplasm</location>
    </subcellularLocation>
    <subcellularLocation>
        <location evidence="5 8 11">Nucleus</location>
    </subcellularLocation>
    <subcellularLocation>
        <location evidence="3 7">Nucleus</location>
    </subcellularLocation>
    <subcellularLocation>
        <location evidence="7">Cytoplasm</location>
        <location evidence="7">P-body</location>
    </subcellularLocation>
    <subcellularLocation>
        <location evidence="7">Cytoplasm</location>
        <location evidence="7">Stress granule</location>
    </subcellularLocation>
    <text evidence="5 11">Shuttles between nucleus and cytoplasm (PubMed:9499403). Nuclear at steady state and its import is mediated by the karyopherin MTR10. Export is dependent on active transcription and the export of mRNAs in general. Depends on MFT1 and HPR1 for nuclear export (PubMed:14676199).</text>
</comment>
<comment type="PTM">
    <text evidence="11">Methylated by HMT1.</text>
</comment>
<comment type="disruption phenotype">
    <text evidence="10">Sensitive to boron and hydrogen peroxide (PubMed:37776379). Decreases cell population growth (PubMed:37776379).</text>
</comment>
<comment type="miscellaneous">
    <text evidence="4">Present with 1990 molecules/cell in log phase SD medium.</text>
</comment>
<comment type="sequence caution" evidence="13">
    <conflict type="erroneous gene model prediction">
        <sequence resource="EMBL-CDS" id="AAA64803"/>
    </conflict>
</comment>
<comment type="sequence caution" evidence="13">
    <conflict type="erroneous gene model prediction">
        <sequence resource="EMBL-CDS" id="CAA54378"/>
    </conflict>
</comment>
<comment type="sequence caution" evidence="13">
    <conflict type="erroneous gene model prediction">
        <sequence resource="EMBL-CDS" id="CAA95863"/>
    </conflict>
</comment>
<dbReference type="EMBL" id="U02536">
    <property type="protein sequence ID" value="AAA64803.1"/>
    <property type="status" value="ALT_SEQ"/>
    <property type="molecule type" value="Genomic_DNA"/>
</dbReference>
<dbReference type="EMBL" id="X77114">
    <property type="protein sequence ID" value="CAA54378.1"/>
    <property type="status" value="ALT_SEQ"/>
    <property type="molecule type" value="Genomic_DNA"/>
</dbReference>
<dbReference type="EMBL" id="Z71280">
    <property type="protein sequence ID" value="CAA95863.1"/>
    <property type="status" value="ALT_SEQ"/>
    <property type="molecule type" value="Genomic_DNA"/>
</dbReference>
<dbReference type="EMBL" id="DQ881449">
    <property type="protein sequence ID" value="ABI95876.1"/>
    <property type="molecule type" value="mRNA"/>
</dbReference>
<dbReference type="EMBL" id="EF123128">
    <property type="protein sequence ID" value="ABM97472.1"/>
    <property type="molecule type" value="mRNA"/>
</dbReference>
<dbReference type="EMBL" id="BK006947">
    <property type="protein sequence ID" value="DAA10539.1"/>
    <property type="molecule type" value="Genomic_DNA"/>
</dbReference>
<dbReference type="PIR" id="S45459">
    <property type="entry name" value="S45459"/>
</dbReference>
<dbReference type="RefSeq" id="NP_014394.2">
    <property type="nucleotide sequence ID" value="NM_001182843.1"/>
</dbReference>
<dbReference type="PDB" id="2MZR">
    <property type="method" value="NMR"/>
    <property type="chains" value="A=144-236"/>
</dbReference>
<dbReference type="PDB" id="2MZS">
    <property type="method" value="NMR"/>
    <property type="chains" value="A=262-358"/>
</dbReference>
<dbReference type="PDB" id="2MZT">
    <property type="method" value="NMR"/>
    <property type="chains" value="A=357-454"/>
</dbReference>
<dbReference type="PDBsum" id="2MZR"/>
<dbReference type="PDBsum" id="2MZS"/>
<dbReference type="PDBsum" id="2MZT"/>
<dbReference type="SMR" id="P38922"/>
<dbReference type="BioGRID" id="35821">
    <property type="interactions" value="242"/>
</dbReference>
<dbReference type="DIP" id="DIP-4959N"/>
<dbReference type="FunCoup" id="P38922">
    <property type="interactions" value="547"/>
</dbReference>
<dbReference type="IntAct" id="P38922">
    <property type="interactions" value="28"/>
</dbReference>
<dbReference type="MINT" id="P38922"/>
<dbReference type="STRING" id="4932.YNL004W"/>
<dbReference type="iPTMnet" id="P38922"/>
<dbReference type="PaxDb" id="4932-YNL004W"/>
<dbReference type="PeptideAtlas" id="P38922"/>
<dbReference type="EnsemblFungi" id="YNL004W_mRNA">
    <property type="protein sequence ID" value="YNL004W"/>
    <property type="gene ID" value="YNL004W"/>
</dbReference>
<dbReference type="GeneID" id="855728"/>
<dbReference type="KEGG" id="sce:YNL004W"/>
<dbReference type="AGR" id="SGD:S000004949"/>
<dbReference type="SGD" id="S000004949">
    <property type="gene designation" value="HRB1"/>
</dbReference>
<dbReference type="VEuPathDB" id="FungiDB:YNL004W"/>
<dbReference type="eggNOG" id="KOG0118">
    <property type="taxonomic scope" value="Eukaryota"/>
</dbReference>
<dbReference type="GeneTree" id="ENSGT00940000168568"/>
<dbReference type="HOGENOM" id="CLU_026447_2_0_1"/>
<dbReference type="InParanoid" id="P38922"/>
<dbReference type="OMA" id="TNAADAW"/>
<dbReference type="OrthoDB" id="1049195at2759"/>
<dbReference type="BioCyc" id="YEAST:G3O-33046-MONOMER"/>
<dbReference type="BioGRID-ORCS" id="855728">
    <property type="hits" value="3 hits in 10 CRISPR screens"/>
</dbReference>
<dbReference type="EvolutionaryTrace" id="P38922"/>
<dbReference type="PRO" id="PR:P38922"/>
<dbReference type="Proteomes" id="UP000002311">
    <property type="component" value="Chromosome XIV"/>
</dbReference>
<dbReference type="RNAct" id="P38922">
    <property type="molecule type" value="protein"/>
</dbReference>
<dbReference type="GO" id="GO:0005737">
    <property type="term" value="C:cytoplasm"/>
    <property type="evidence" value="ECO:0000314"/>
    <property type="project" value="SGD"/>
</dbReference>
<dbReference type="GO" id="GO:0010494">
    <property type="term" value="C:cytoplasmic stress granule"/>
    <property type="evidence" value="ECO:0007669"/>
    <property type="project" value="UniProtKB-SubCell"/>
</dbReference>
<dbReference type="GO" id="GO:0005634">
    <property type="term" value="C:nucleus"/>
    <property type="evidence" value="ECO:0000314"/>
    <property type="project" value="SGD"/>
</dbReference>
<dbReference type="GO" id="GO:0000932">
    <property type="term" value="C:P-body"/>
    <property type="evidence" value="ECO:0007669"/>
    <property type="project" value="UniProtKB-SubCell"/>
</dbReference>
<dbReference type="GO" id="GO:1990904">
    <property type="term" value="C:ribonucleoprotein complex"/>
    <property type="evidence" value="ECO:0000318"/>
    <property type="project" value="GO_Central"/>
</dbReference>
<dbReference type="GO" id="GO:0003682">
    <property type="term" value="F:chromatin binding"/>
    <property type="evidence" value="ECO:0000314"/>
    <property type="project" value="SGD"/>
</dbReference>
<dbReference type="GO" id="GO:0003729">
    <property type="term" value="F:mRNA binding"/>
    <property type="evidence" value="ECO:0000314"/>
    <property type="project" value="SGD"/>
</dbReference>
<dbReference type="GO" id="GO:0003723">
    <property type="term" value="F:RNA binding"/>
    <property type="evidence" value="ECO:0000314"/>
    <property type="project" value="SGD"/>
</dbReference>
<dbReference type="GO" id="GO:0071028">
    <property type="term" value="P:nuclear mRNA surveillance"/>
    <property type="evidence" value="ECO:0000315"/>
    <property type="project" value="SGD"/>
</dbReference>
<dbReference type="GO" id="GO:0016973">
    <property type="term" value="P:poly(A)+ mRNA export from nucleus"/>
    <property type="evidence" value="ECO:0000318"/>
    <property type="project" value="GO_Central"/>
</dbReference>
<dbReference type="CDD" id="cd21605">
    <property type="entry name" value="RRM1_HRB1_GBP2"/>
    <property type="match status" value="1"/>
</dbReference>
<dbReference type="CDD" id="cd21606">
    <property type="entry name" value="RRM2_HRB1_GBP2"/>
    <property type="match status" value="1"/>
</dbReference>
<dbReference type="CDD" id="cd21607">
    <property type="entry name" value="RRM3_HRB1_GBP2"/>
    <property type="match status" value="1"/>
</dbReference>
<dbReference type="FunFam" id="3.30.70.330:FF:000508">
    <property type="entry name" value="Protein HRB1"/>
    <property type="match status" value="1"/>
</dbReference>
<dbReference type="Gene3D" id="3.30.70.330">
    <property type="match status" value="3"/>
</dbReference>
<dbReference type="InterPro" id="IPR012677">
    <property type="entry name" value="Nucleotide-bd_a/b_plait_sf"/>
</dbReference>
<dbReference type="InterPro" id="IPR035979">
    <property type="entry name" value="RBD_domain_sf"/>
</dbReference>
<dbReference type="InterPro" id="IPR000504">
    <property type="entry name" value="RRM_dom"/>
</dbReference>
<dbReference type="InterPro" id="IPR050374">
    <property type="entry name" value="RRT5_SRSF_SR"/>
</dbReference>
<dbReference type="PANTHER" id="PTHR23003">
    <property type="entry name" value="RNA RECOGNITION MOTIF RRM DOMAIN CONTAINING PROTEIN"/>
    <property type="match status" value="1"/>
</dbReference>
<dbReference type="Pfam" id="PF00076">
    <property type="entry name" value="RRM_1"/>
    <property type="match status" value="3"/>
</dbReference>
<dbReference type="SMART" id="SM00360">
    <property type="entry name" value="RRM"/>
    <property type="match status" value="3"/>
</dbReference>
<dbReference type="SUPFAM" id="SSF54928">
    <property type="entry name" value="RNA-binding domain, RBD"/>
    <property type="match status" value="2"/>
</dbReference>
<dbReference type="PROSITE" id="PS50102">
    <property type="entry name" value="RRM"/>
    <property type="match status" value="3"/>
</dbReference>